<name>GLMU_SALAR</name>
<organism>
    <name type="scientific">Salmonella arizonae (strain ATCC BAA-731 / CDC346-86 / RSK2980)</name>
    <dbReference type="NCBI Taxonomy" id="41514"/>
    <lineage>
        <taxon>Bacteria</taxon>
        <taxon>Pseudomonadati</taxon>
        <taxon>Pseudomonadota</taxon>
        <taxon>Gammaproteobacteria</taxon>
        <taxon>Enterobacterales</taxon>
        <taxon>Enterobacteriaceae</taxon>
        <taxon>Salmonella</taxon>
    </lineage>
</organism>
<sequence>MLNSAMSVVILAAGKGTRMYSDIPKVLHTLAGKAMVQHVIDAANELGASQVHLVYGHGGDLLKQTLKNDNLNWVLQAEQLGTGHAMQQAAPFFGDDENILMLYGDVPLISVETLQRLRDAKPQGGIGLLTVKLDDPSGYGRITRVNGKVTGIVEHKDATDEQRQIKEINTGILIANGADMKRWLSKLTNNNAQGEYYITDIIALAYQEGREIAAVHPARISETEGVNNRLQLSRLERIYQAEQAEKLLLAGVMLRDPARFDLRGNLAHGRDVEIDTNVIIEGNVTLGHRVKIGTGCIIKNSVIGDDCEISPYSVVEDARLDPACTIGPFARLRPGAELLAGAHVGNFVEMKKARLGKGSKAGHLTYLGDADIGDNVNIGAGTITCNYDGANKFKTIIGDDVFVGSDTQLVAPVTVGKGATIAAGTTVTRNVADNELVLSRVPQVHKQGWQRPVKK</sequence>
<gene>
    <name evidence="1" type="primary">glmU</name>
    <name type="ordered locus">SARI_03789</name>
</gene>
<accession>A9MJS2</accession>
<reference key="1">
    <citation type="submission" date="2007-11" db="EMBL/GenBank/DDBJ databases">
        <authorList>
            <consortium name="The Salmonella enterica serovar Arizonae Genome Sequencing Project"/>
            <person name="McClelland M."/>
            <person name="Sanderson E.K."/>
            <person name="Porwollik S."/>
            <person name="Spieth J."/>
            <person name="Clifton W.S."/>
            <person name="Fulton R."/>
            <person name="Chunyan W."/>
            <person name="Wollam A."/>
            <person name="Shah N."/>
            <person name="Pepin K."/>
            <person name="Bhonagiri V."/>
            <person name="Nash W."/>
            <person name="Johnson M."/>
            <person name="Thiruvilangam P."/>
            <person name="Wilson R."/>
        </authorList>
    </citation>
    <scope>NUCLEOTIDE SEQUENCE [LARGE SCALE GENOMIC DNA]</scope>
    <source>
        <strain>ATCC BAA-731 / CDC346-86 / RSK2980</strain>
    </source>
</reference>
<proteinExistence type="inferred from homology"/>
<feature type="chain" id="PRO_1000088137" description="Bifunctional protein GlmU">
    <location>
        <begin position="1"/>
        <end position="455"/>
    </location>
</feature>
<feature type="region of interest" description="Pyrophosphorylase" evidence="1">
    <location>
        <begin position="1"/>
        <end position="229"/>
    </location>
</feature>
<feature type="region of interest" description="Linker" evidence="1">
    <location>
        <begin position="230"/>
        <end position="250"/>
    </location>
</feature>
<feature type="region of interest" description="N-acetyltransferase" evidence="1">
    <location>
        <begin position="251"/>
        <end position="455"/>
    </location>
</feature>
<feature type="active site" description="Proton acceptor" evidence="1">
    <location>
        <position position="363"/>
    </location>
</feature>
<feature type="binding site" evidence="1">
    <location>
        <begin position="11"/>
        <end position="14"/>
    </location>
    <ligand>
        <name>UDP-N-acetyl-alpha-D-glucosamine</name>
        <dbReference type="ChEBI" id="CHEBI:57705"/>
    </ligand>
</feature>
<feature type="binding site" evidence="1">
    <location>
        <position position="25"/>
    </location>
    <ligand>
        <name>UDP-N-acetyl-alpha-D-glucosamine</name>
        <dbReference type="ChEBI" id="CHEBI:57705"/>
    </ligand>
</feature>
<feature type="binding site" evidence="1">
    <location>
        <position position="76"/>
    </location>
    <ligand>
        <name>UDP-N-acetyl-alpha-D-glucosamine</name>
        <dbReference type="ChEBI" id="CHEBI:57705"/>
    </ligand>
</feature>
<feature type="binding site" evidence="1">
    <location>
        <begin position="81"/>
        <end position="82"/>
    </location>
    <ligand>
        <name>UDP-N-acetyl-alpha-D-glucosamine</name>
        <dbReference type="ChEBI" id="CHEBI:57705"/>
    </ligand>
</feature>
<feature type="binding site" evidence="1">
    <location>
        <begin position="103"/>
        <end position="105"/>
    </location>
    <ligand>
        <name>UDP-N-acetyl-alpha-D-glucosamine</name>
        <dbReference type="ChEBI" id="CHEBI:57705"/>
    </ligand>
</feature>
<feature type="binding site" evidence="1">
    <location>
        <position position="105"/>
    </location>
    <ligand>
        <name>Mg(2+)</name>
        <dbReference type="ChEBI" id="CHEBI:18420"/>
    </ligand>
</feature>
<feature type="binding site" evidence="1">
    <location>
        <position position="140"/>
    </location>
    <ligand>
        <name>UDP-N-acetyl-alpha-D-glucosamine</name>
        <dbReference type="ChEBI" id="CHEBI:57705"/>
    </ligand>
</feature>
<feature type="binding site" evidence="1">
    <location>
        <position position="154"/>
    </location>
    <ligand>
        <name>UDP-N-acetyl-alpha-D-glucosamine</name>
        <dbReference type="ChEBI" id="CHEBI:57705"/>
    </ligand>
</feature>
<feature type="binding site" evidence="1">
    <location>
        <position position="169"/>
    </location>
    <ligand>
        <name>UDP-N-acetyl-alpha-D-glucosamine</name>
        <dbReference type="ChEBI" id="CHEBI:57705"/>
    </ligand>
</feature>
<feature type="binding site" evidence="1">
    <location>
        <position position="227"/>
    </location>
    <ligand>
        <name>Mg(2+)</name>
        <dbReference type="ChEBI" id="CHEBI:18420"/>
    </ligand>
</feature>
<feature type="binding site" evidence="1">
    <location>
        <position position="227"/>
    </location>
    <ligand>
        <name>UDP-N-acetyl-alpha-D-glucosamine</name>
        <dbReference type="ChEBI" id="CHEBI:57705"/>
    </ligand>
</feature>
<feature type="binding site" evidence="1">
    <location>
        <position position="333"/>
    </location>
    <ligand>
        <name>UDP-N-acetyl-alpha-D-glucosamine</name>
        <dbReference type="ChEBI" id="CHEBI:57705"/>
    </ligand>
</feature>
<feature type="binding site" evidence="1">
    <location>
        <position position="351"/>
    </location>
    <ligand>
        <name>UDP-N-acetyl-alpha-D-glucosamine</name>
        <dbReference type="ChEBI" id="CHEBI:57705"/>
    </ligand>
</feature>
<feature type="binding site" evidence="1">
    <location>
        <position position="366"/>
    </location>
    <ligand>
        <name>UDP-N-acetyl-alpha-D-glucosamine</name>
        <dbReference type="ChEBI" id="CHEBI:57705"/>
    </ligand>
</feature>
<feature type="binding site" evidence="1">
    <location>
        <position position="377"/>
    </location>
    <ligand>
        <name>UDP-N-acetyl-alpha-D-glucosamine</name>
        <dbReference type="ChEBI" id="CHEBI:57705"/>
    </ligand>
</feature>
<feature type="binding site" evidence="1">
    <location>
        <position position="380"/>
    </location>
    <ligand>
        <name>acetyl-CoA</name>
        <dbReference type="ChEBI" id="CHEBI:57288"/>
    </ligand>
</feature>
<feature type="binding site" evidence="1">
    <location>
        <begin position="386"/>
        <end position="387"/>
    </location>
    <ligand>
        <name>acetyl-CoA</name>
        <dbReference type="ChEBI" id="CHEBI:57288"/>
    </ligand>
</feature>
<feature type="binding site" evidence="1">
    <location>
        <position position="405"/>
    </location>
    <ligand>
        <name>acetyl-CoA</name>
        <dbReference type="ChEBI" id="CHEBI:57288"/>
    </ligand>
</feature>
<feature type="binding site" evidence="1">
    <location>
        <position position="423"/>
    </location>
    <ligand>
        <name>acetyl-CoA</name>
        <dbReference type="ChEBI" id="CHEBI:57288"/>
    </ligand>
</feature>
<feature type="binding site" evidence="1">
    <location>
        <position position="440"/>
    </location>
    <ligand>
        <name>acetyl-CoA</name>
        <dbReference type="ChEBI" id="CHEBI:57288"/>
    </ligand>
</feature>
<dbReference type="EC" id="2.7.7.23" evidence="1"/>
<dbReference type="EC" id="2.3.1.157" evidence="1"/>
<dbReference type="EMBL" id="CP000880">
    <property type="protein sequence ID" value="ABX23583.1"/>
    <property type="molecule type" value="Genomic_DNA"/>
</dbReference>
<dbReference type="SMR" id="A9MJS2"/>
<dbReference type="STRING" id="41514.SARI_03789"/>
<dbReference type="KEGG" id="ses:SARI_03789"/>
<dbReference type="HOGENOM" id="CLU_029499_15_2_6"/>
<dbReference type="UniPathway" id="UPA00113">
    <property type="reaction ID" value="UER00532"/>
</dbReference>
<dbReference type="UniPathway" id="UPA00113">
    <property type="reaction ID" value="UER00533"/>
</dbReference>
<dbReference type="UniPathway" id="UPA00973"/>
<dbReference type="Proteomes" id="UP000002084">
    <property type="component" value="Chromosome"/>
</dbReference>
<dbReference type="GO" id="GO:0005737">
    <property type="term" value="C:cytoplasm"/>
    <property type="evidence" value="ECO:0007669"/>
    <property type="project" value="UniProtKB-SubCell"/>
</dbReference>
<dbReference type="GO" id="GO:0016020">
    <property type="term" value="C:membrane"/>
    <property type="evidence" value="ECO:0007669"/>
    <property type="project" value="GOC"/>
</dbReference>
<dbReference type="GO" id="GO:0019134">
    <property type="term" value="F:glucosamine-1-phosphate N-acetyltransferase activity"/>
    <property type="evidence" value="ECO:0007669"/>
    <property type="project" value="UniProtKB-UniRule"/>
</dbReference>
<dbReference type="GO" id="GO:0000287">
    <property type="term" value="F:magnesium ion binding"/>
    <property type="evidence" value="ECO:0007669"/>
    <property type="project" value="UniProtKB-UniRule"/>
</dbReference>
<dbReference type="GO" id="GO:0003977">
    <property type="term" value="F:UDP-N-acetylglucosamine diphosphorylase activity"/>
    <property type="evidence" value="ECO:0007669"/>
    <property type="project" value="UniProtKB-UniRule"/>
</dbReference>
<dbReference type="GO" id="GO:0000902">
    <property type="term" value="P:cell morphogenesis"/>
    <property type="evidence" value="ECO:0007669"/>
    <property type="project" value="UniProtKB-UniRule"/>
</dbReference>
<dbReference type="GO" id="GO:0071555">
    <property type="term" value="P:cell wall organization"/>
    <property type="evidence" value="ECO:0007669"/>
    <property type="project" value="UniProtKB-KW"/>
</dbReference>
<dbReference type="GO" id="GO:0009245">
    <property type="term" value="P:lipid A biosynthetic process"/>
    <property type="evidence" value="ECO:0007669"/>
    <property type="project" value="UniProtKB-UniRule"/>
</dbReference>
<dbReference type="GO" id="GO:0009252">
    <property type="term" value="P:peptidoglycan biosynthetic process"/>
    <property type="evidence" value="ECO:0007669"/>
    <property type="project" value="UniProtKB-UniRule"/>
</dbReference>
<dbReference type="GO" id="GO:0008360">
    <property type="term" value="P:regulation of cell shape"/>
    <property type="evidence" value="ECO:0007669"/>
    <property type="project" value="UniProtKB-KW"/>
</dbReference>
<dbReference type="GO" id="GO:0006048">
    <property type="term" value="P:UDP-N-acetylglucosamine biosynthetic process"/>
    <property type="evidence" value="ECO:0007669"/>
    <property type="project" value="UniProtKB-UniPathway"/>
</dbReference>
<dbReference type="CDD" id="cd02540">
    <property type="entry name" value="GT2_GlmU_N_bac"/>
    <property type="match status" value="1"/>
</dbReference>
<dbReference type="CDD" id="cd03353">
    <property type="entry name" value="LbH_GlmU_C"/>
    <property type="match status" value="1"/>
</dbReference>
<dbReference type="FunFam" id="2.160.10.10:FF:000011">
    <property type="entry name" value="Bifunctional protein GlmU"/>
    <property type="match status" value="1"/>
</dbReference>
<dbReference type="FunFam" id="3.90.550.10:FF:000006">
    <property type="entry name" value="Bifunctional protein GlmU"/>
    <property type="match status" value="1"/>
</dbReference>
<dbReference type="Gene3D" id="2.160.10.10">
    <property type="entry name" value="Hexapeptide repeat proteins"/>
    <property type="match status" value="1"/>
</dbReference>
<dbReference type="Gene3D" id="3.90.550.10">
    <property type="entry name" value="Spore Coat Polysaccharide Biosynthesis Protein SpsA, Chain A"/>
    <property type="match status" value="1"/>
</dbReference>
<dbReference type="HAMAP" id="MF_01631">
    <property type="entry name" value="GlmU"/>
    <property type="match status" value="1"/>
</dbReference>
<dbReference type="InterPro" id="IPR005882">
    <property type="entry name" value="Bifunctional_GlmU"/>
</dbReference>
<dbReference type="InterPro" id="IPR050065">
    <property type="entry name" value="GlmU-like"/>
</dbReference>
<dbReference type="InterPro" id="IPR038009">
    <property type="entry name" value="GlmU_C_LbH"/>
</dbReference>
<dbReference type="InterPro" id="IPR001451">
    <property type="entry name" value="Hexapep"/>
</dbReference>
<dbReference type="InterPro" id="IPR018357">
    <property type="entry name" value="Hexapep_transf_CS"/>
</dbReference>
<dbReference type="InterPro" id="IPR025877">
    <property type="entry name" value="MobA-like_NTP_Trfase"/>
</dbReference>
<dbReference type="InterPro" id="IPR029044">
    <property type="entry name" value="Nucleotide-diphossugar_trans"/>
</dbReference>
<dbReference type="InterPro" id="IPR011004">
    <property type="entry name" value="Trimer_LpxA-like_sf"/>
</dbReference>
<dbReference type="NCBIfam" id="TIGR01173">
    <property type="entry name" value="glmU"/>
    <property type="match status" value="1"/>
</dbReference>
<dbReference type="NCBIfam" id="NF006986">
    <property type="entry name" value="PRK09451.1"/>
    <property type="match status" value="1"/>
</dbReference>
<dbReference type="PANTHER" id="PTHR43584:SF3">
    <property type="entry name" value="BIFUNCTIONAL PROTEIN GLMU"/>
    <property type="match status" value="1"/>
</dbReference>
<dbReference type="PANTHER" id="PTHR43584">
    <property type="entry name" value="NUCLEOTIDYL TRANSFERASE"/>
    <property type="match status" value="1"/>
</dbReference>
<dbReference type="Pfam" id="PF00132">
    <property type="entry name" value="Hexapep"/>
    <property type="match status" value="1"/>
</dbReference>
<dbReference type="Pfam" id="PF12804">
    <property type="entry name" value="NTP_transf_3"/>
    <property type="match status" value="1"/>
</dbReference>
<dbReference type="SUPFAM" id="SSF53448">
    <property type="entry name" value="Nucleotide-diphospho-sugar transferases"/>
    <property type="match status" value="1"/>
</dbReference>
<dbReference type="SUPFAM" id="SSF51161">
    <property type="entry name" value="Trimeric LpxA-like enzymes"/>
    <property type="match status" value="1"/>
</dbReference>
<dbReference type="PROSITE" id="PS00101">
    <property type="entry name" value="HEXAPEP_TRANSFERASES"/>
    <property type="match status" value="1"/>
</dbReference>
<comment type="function">
    <text evidence="1">Catalyzes the last two sequential reactions in the de novo biosynthetic pathway for UDP-N-acetylglucosamine (UDP-GlcNAc). The C-terminal domain catalyzes the transfer of acetyl group from acetyl coenzyme A to glucosamine-1-phosphate (GlcN-1-P) to produce N-acetylglucosamine-1-phosphate (GlcNAc-1-P), which is converted into UDP-GlcNAc by the transfer of uridine 5-monophosphate (from uridine 5-triphosphate), a reaction catalyzed by the N-terminal domain.</text>
</comment>
<comment type="catalytic activity">
    <reaction evidence="1">
        <text>alpha-D-glucosamine 1-phosphate + acetyl-CoA = N-acetyl-alpha-D-glucosamine 1-phosphate + CoA + H(+)</text>
        <dbReference type="Rhea" id="RHEA:13725"/>
        <dbReference type="ChEBI" id="CHEBI:15378"/>
        <dbReference type="ChEBI" id="CHEBI:57287"/>
        <dbReference type="ChEBI" id="CHEBI:57288"/>
        <dbReference type="ChEBI" id="CHEBI:57776"/>
        <dbReference type="ChEBI" id="CHEBI:58516"/>
        <dbReference type="EC" id="2.3.1.157"/>
    </reaction>
</comment>
<comment type="catalytic activity">
    <reaction evidence="1">
        <text>N-acetyl-alpha-D-glucosamine 1-phosphate + UTP + H(+) = UDP-N-acetyl-alpha-D-glucosamine + diphosphate</text>
        <dbReference type="Rhea" id="RHEA:13509"/>
        <dbReference type="ChEBI" id="CHEBI:15378"/>
        <dbReference type="ChEBI" id="CHEBI:33019"/>
        <dbReference type="ChEBI" id="CHEBI:46398"/>
        <dbReference type="ChEBI" id="CHEBI:57705"/>
        <dbReference type="ChEBI" id="CHEBI:57776"/>
        <dbReference type="EC" id="2.7.7.23"/>
    </reaction>
</comment>
<comment type="cofactor">
    <cofactor evidence="1">
        <name>Mg(2+)</name>
        <dbReference type="ChEBI" id="CHEBI:18420"/>
    </cofactor>
    <text evidence="1">Binds 1 Mg(2+) ion per subunit.</text>
</comment>
<comment type="pathway">
    <text evidence="1">Nucleotide-sugar biosynthesis; UDP-N-acetyl-alpha-D-glucosamine biosynthesis; N-acetyl-alpha-D-glucosamine 1-phosphate from alpha-D-glucosamine 6-phosphate (route II): step 2/2.</text>
</comment>
<comment type="pathway">
    <text evidence="1">Nucleotide-sugar biosynthesis; UDP-N-acetyl-alpha-D-glucosamine biosynthesis; UDP-N-acetyl-alpha-D-glucosamine from N-acetyl-alpha-D-glucosamine 1-phosphate: step 1/1.</text>
</comment>
<comment type="pathway">
    <text evidence="1">Bacterial outer membrane biogenesis; LPS lipid A biosynthesis.</text>
</comment>
<comment type="subunit">
    <text evidence="1">Homotrimer.</text>
</comment>
<comment type="subcellular location">
    <subcellularLocation>
        <location evidence="1">Cytoplasm</location>
    </subcellularLocation>
</comment>
<comment type="similarity">
    <text evidence="1">In the N-terminal section; belongs to the N-acetylglucosamine-1-phosphate uridyltransferase family.</text>
</comment>
<comment type="similarity">
    <text evidence="1">In the C-terminal section; belongs to the transferase hexapeptide repeat family.</text>
</comment>
<keyword id="KW-0012">Acyltransferase</keyword>
<keyword id="KW-0133">Cell shape</keyword>
<keyword id="KW-0961">Cell wall biogenesis/degradation</keyword>
<keyword id="KW-0963">Cytoplasm</keyword>
<keyword id="KW-0460">Magnesium</keyword>
<keyword id="KW-0479">Metal-binding</keyword>
<keyword id="KW-0511">Multifunctional enzyme</keyword>
<keyword id="KW-0548">Nucleotidyltransferase</keyword>
<keyword id="KW-0573">Peptidoglycan synthesis</keyword>
<keyword id="KW-1185">Reference proteome</keyword>
<keyword id="KW-0677">Repeat</keyword>
<keyword id="KW-0808">Transferase</keyword>
<evidence type="ECO:0000255" key="1">
    <source>
        <dbReference type="HAMAP-Rule" id="MF_01631"/>
    </source>
</evidence>
<protein>
    <recommendedName>
        <fullName evidence="1">Bifunctional protein GlmU</fullName>
    </recommendedName>
    <domain>
        <recommendedName>
            <fullName evidence="1">UDP-N-acetylglucosamine pyrophosphorylase</fullName>
            <ecNumber evidence="1">2.7.7.23</ecNumber>
        </recommendedName>
        <alternativeName>
            <fullName evidence="1">N-acetylglucosamine-1-phosphate uridyltransferase</fullName>
        </alternativeName>
    </domain>
    <domain>
        <recommendedName>
            <fullName evidence="1">Glucosamine-1-phosphate N-acetyltransferase</fullName>
            <ecNumber evidence="1">2.3.1.157</ecNumber>
        </recommendedName>
    </domain>
</protein>